<reference key="1">
    <citation type="journal article" date="2001" name="Mol. Biol. Evol.">
        <title>Pseudogenes, junk DNA, and the dynamics of Rickettsia genomes.</title>
        <authorList>
            <person name="Andersson J.O."/>
            <person name="Andersson S.G.E."/>
        </authorList>
    </citation>
    <scope>NUCLEOTIDE SEQUENCE [GENOMIC DNA]</scope>
</reference>
<gene>
    <name evidence="1" type="primary">smpB</name>
</gene>
<feature type="chain" id="PRO_0000103017" description="SsrA-binding protein">
    <location>
        <begin position="1"/>
        <end position="152"/>
    </location>
</feature>
<evidence type="ECO:0000255" key="1">
    <source>
        <dbReference type="HAMAP-Rule" id="MF_00023"/>
    </source>
</evidence>
<accession>Q9AKQ2</accession>
<comment type="function">
    <text evidence="1">Required for rescue of stalled ribosomes mediated by trans-translation. Binds to transfer-messenger RNA (tmRNA), required for stable association of tmRNA with ribosomes. tmRNA and SmpB together mimic tRNA shape, replacing the anticodon stem-loop with SmpB. tmRNA is encoded by the ssrA gene; the 2 termini fold to resemble tRNA(Ala) and it encodes a 'tag peptide', a short internal open reading frame. During trans-translation Ala-aminoacylated tmRNA acts like a tRNA, entering the A-site of stalled ribosomes, displacing the stalled mRNA. The ribosome then switches to translate the ORF on the tmRNA; the nascent peptide is terminated with the 'tag peptide' encoded by the tmRNA and targeted for degradation. The ribosome is freed to recommence translation, which seems to be the essential function of trans-translation.</text>
</comment>
<comment type="subcellular location">
    <subcellularLocation>
        <location evidence="1">Cytoplasm</location>
    </subcellularLocation>
    <text evidence="1">The tmRNA-SmpB complex associates with stalled 70S ribosomes.</text>
</comment>
<comment type="similarity">
    <text evidence="1">Belongs to the SmpB family.</text>
</comment>
<name>SSRP_RICMO</name>
<protein>
    <recommendedName>
        <fullName evidence="1">SsrA-binding protein</fullName>
    </recommendedName>
    <alternativeName>
        <fullName evidence="1">Small protein B</fullName>
    </alternativeName>
</protein>
<keyword id="KW-0963">Cytoplasm</keyword>
<keyword id="KW-0694">RNA-binding</keyword>
<proteinExistence type="inferred from homology"/>
<dbReference type="EMBL" id="AJ293312">
    <property type="protein sequence ID" value="CAC33595.1"/>
    <property type="molecule type" value="Genomic_DNA"/>
</dbReference>
<dbReference type="SMR" id="Q9AKQ2"/>
<dbReference type="OMA" id="WTNHSAR"/>
<dbReference type="GO" id="GO:0005829">
    <property type="term" value="C:cytosol"/>
    <property type="evidence" value="ECO:0007669"/>
    <property type="project" value="TreeGrafter"/>
</dbReference>
<dbReference type="GO" id="GO:0003723">
    <property type="term" value="F:RNA binding"/>
    <property type="evidence" value="ECO:0007669"/>
    <property type="project" value="UniProtKB-UniRule"/>
</dbReference>
<dbReference type="GO" id="GO:0070929">
    <property type="term" value="P:trans-translation"/>
    <property type="evidence" value="ECO:0007669"/>
    <property type="project" value="UniProtKB-UniRule"/>
</dbReference>
<dbReference type="CDD" id="cd09294">
    <property type="entry name" value="SmpB"/>
    <property type="match status" value="1"/>
</dbReference>
<dbReference type="Gene3D" id="2.40.280.10">
    <property type="match status" value="1"/>
</dbReference>
<dbReference type="HAMAP" id="MF_00023">
    <property type="entry name" value="SmpB"/>
    <property type="match status" value="1"/>
</dbReference>
<dbReference type="InterPro" id="IPR023620">
    <property type="entry name" value="SmpB"/>
</dbReference>
<dbReference type="InterPro" id="IPR000037">
    <property type="entry name" value="SsrA-bd_prot"/>
</dbReference>
<dbReference type="InterPro" id="IPR020081">
    <property type="entry name" value="SsrA-bd_prot_CS"/>
</dbReference>
<dbReference type="NCBIfam" id="NF003843">
    <property type="entry name" value="PRK05422.1"/>
    <property type="match status" value="1"/>
</dbReference>
<dbReference type="NCBIfam" id="TIGR00086">
    <property type="entry name" value="smpB"/>
    <property type="match status" value="1"/>
</dbReference>
<dbReference type="PANTHER" id="PTHR30308:SF2">
    <property type="entry name" value="SSRA-BINDING PROTEIN"/>
    <property type="match status" value="1"/>
</dbReference>
<dbReference type="PANTHER" id="PTHR30308">
    <property type="entry name" value="TMRNA-BINDING COMPONENT OF TRANS-TRANSLATION TAGGING COMPLEX"/>
    <property type="match status" value="1"/>
</dbReference>
<dbReference type="Pfam" id="PF01668">
    <property type="entry name" value="SmpB"/>
    <property type="match status" value="1"/>
</dbReference>
<dbReference type="SUPFAM" id="SSF74982">
    <property type="entry name" value="Small protein B (SmpB)"/>
    <property type="match status" value="1"/>
</dbReference>
<dbReference type="PROSITE" id="PS01317">
    <property type="entry name" value="SSRP"/>
    <property type="match status" value="1"/>
</dbReference>
<organism>
    <name type="scientific">Rickettsia montanensis</name>
    <dbReference type="NCBI Taxonomy" id="33991"/>
    <lineage>
        <taxon>Bacteria</taxon>
        <taxon>Pseudomonadati</taxon>
        <taxon>Pseudomonadota</taxon>
        <taxon>Alphaproteobacteria</taxon>
        <taxon>Rickettsiales</taxon>
        <taxon>Rickettsiaceae</taxon>
        <taxon>Rickettsieae</taxon>
        <taxon>Rickettsia</taxon>
        <taxon>spotted fever group</taxon>
    </lineage>
</organism>
<sequence length="152" mass="17870">MTEYKKVIAQNKKALFNYFIEERLEAGIVLKGSEVQSLRQGKASIEESHAADTGHEVFLYNCHIAEYEKANRFNHATRRPRKLLLHTKEIKKIIGRIRIKGYTLVALSMYFNKKNKVKVELGIAKGKKLRDKRESIKEKNWKRDQSRLIRQK</sequence>